<gene>
    <name evidence="1" type="primary">rpl14</name>
    <name type="ordered locus">STK_04220</name>
</gene>
<sequence length="138" mass="15168">MPEKLQVLGSRKGLTPGLQHYTTVTVADNSGAKEAVIIGIYGYKGVLRRIPFANIADLVMVSVRKGTPEVRKQKFKAVIVRQRMPFRRPDGTWIAFEDNAVVIVNPDGTPKGTEIRGPIAKEAAERWPKVASIATMVI</sequence>
<evidence type="ECO:0000255" key="1">
    <source>
        <dbReference type="HAMAP-Rule" id="MF_01367"/>
    </source>
</evidence>
<evidence type="ECO:0000305" key="2"/>
<organism>
    <name type="scientific">Sulfurisphaera tokodaii (strain DSM 16993 / JCM 10545 / NBRC 100140 / 7)</name>
    <name type="common">Sulfolobus tokodaii</name>
    <dbReference type="NCBI Taxonomy" id="273063"/>
    <lineage>
        <taxon>Archaea</taxon>
        <taxon>Thermoproteota</taxon>
        <taxon>Thermoprotei</taxon>
        <taxon>Sulfolobales</taxon>
        <taxon>Sulfolobaceae</taxon>
        <taxon>Sulfurisphaera</taxon>
    </lineage>
</organism>
<name>RL14_SULTO</name>
<feature type="chain" id="PRO_0000266615" description="Large ribosomal subunit protein uL14">
    <location>
        <begin position="1"/>
        <end position="138"/>
    </location>
</feature>
<accession>Q975J0</accession>
<accession>F9VMX7</accession>
<dbReference type="EMBL" id="BA000023">
    <property type="protein sequence ID" value="BAK54274.1"/>
    <property type="molecule type" value="Genomic_DNA"/>
</dbReference>
<dbReference type="RefSeq" id="WP_052846308.1">
    <property type="nucleotide sequence ID" value="NC_003106.2"/>
</dbReference>
<dbReference type="SMR" id="Q975J0"/>
<dbReference type="STRING" id="273063.STK_04220"/>
<dbReference type="KEGG" id="sto:STK_04220"/>
<dbReference type="PATRIC" id="fig|273063.9.peg.490"/>
<dbReference type="eggNOG" id="arCOG04095">
    <property type="taxonomic scope" value="Archaea"/>
</dbReference>
<dbReference type="OrthoDB" id="23569at2157"/>
<dbReference type="Proteomes" id="UP000001015">
    <property type="component" value="Chromosome"/>
</dbReference>
<dbReference type="GO" id="GO:0022625">
    <property type="term" value="C:cytosolic large ribosomal subunit"/>
    <property type="evidence" value="ECO:0007669"/>
    <property type="project" value="TreeGrafter"/>
</dbReference>
<dbReference type="GO" id="GO:0070180">
    <property type="term" value="F:large ribosomal subunit rRNA binding"/>
    <property type="evidence" value="ECO:0007669"/>
    <property type="project" value="TreeGrafter"/>
</dbReference>
<dbReference type="GO" id="GO:0003735">
    <property type="term" value="F:structural constituent of ribosome"/>
    <property type="evidence" value="ECO:0007669"/>
    <property type="project" value="InterPro"/>
</dbReference>
<dbReference type="GO" id="GO:0006412">
    <property type="term" value="P:translation"/>
    <property type="evidence" value="ECO:0007669"/>
    <property type="project" value="UniProtKB-UniRule"/>
</dbReference>
<dbReference type="CDD" id="cd00337">
    <property type="entry name" value="Ribosomal_uL14"/>
    <property type="match status" value="1"/>
</dbReference>
<dbReference type="FunFam" id="2.40.150.20:FF:000007">
    <property type="entry name" value="50S ribosomal protein L14"/>
    <property type="match status" value="1"/>
</dbReference>
<dbReference type="Gene3D" id="2.40.150.20">
    <property type="entry name" value="Ribosomal protein L14"/>
    <property type="match status" value="1"/>
</dbReference>
<dbReference type="HAMAP" id="MF_01367">
    <property type="entry name" value="Ribosomal_uL14"/>
    <property type="match status" value="1"/>
</dbReference>
<dbReference type="InterPro" id="IPR000218">
    <property type="entry name" value="Ribosomal_uL14"/>
</dbReference>
<dbReference type="InterPro" id="IPR019971">
    <property type="entry name" value="Ribosomal_uL14_arc"/>
</dbReference>
<dbReference type="InterPro" id="IPR019972">
    <property type="entry name" value="Ribosomal_uL14_CS"/>
</dbReference>
<dbReference type="InterPro" id="IPR036853">
    <property type="entry name" value="Ribosomal_uL14_sf"/>
</dbReference>
<dbReference type="NCBIfam" id="NF006344">
    <property type="entry name" value="PRK08571.1"/>
    <property type="match status" value="1"/>
</dbReference>
<dbReference type="NCBIfam" id="TIGR03673">
    <property type="entry name" value="uL14_arch"/>
    <property type="match status" value="1"/>
</dbReference>
<dbReference type="PANTHER" id="PTHR11761">
    <property type="entry name" value="50S/60S RIBOSOMAL PROTEIN L14/L23"/>
    <property type="match status" value="1"/>
</dbReference>
<dbReference type="PANTHER" id="PTHR11761:SF8">
    <property type="entry name" value="LARGE RIBOSOMAL SUBUNIT PROTEIN UL14"/>
    <property type="match status" value="1"/>
</dbReference>
<dbReference type="Pfam" id="PF00238">
    <property type="entry name" value="Ribosomal_L14"/>
    <property type="match status" value="1"/>
</dbReference>
<dbReference type="SMART" id="SM01374">
    <property type="entry name" value="Ribosomal_L14"/>
    <property type="match status" value="1"/>
</dbReference>
<dbReference type="SUPFAM" id="SSF50193">
    <property type="entry name" value="Ribosomal protein L14"/>
    <property type="match status" value="1"/>
</dbReference>
<dbReference type="PROSITE" id="PS00049">
    <property type="entry name" value="RIBOSOMAL_L14"/>
    <property type="match status" value="1"/>
</dbReference>
<comment type="function">
    <text evidence="1">Binds to 23S rRNA. Forms part of two intersubunit bridges in the 70S ribosome.</text>
</comment>
<comment type="subunit">
    <text evidence="1">Part of the 50S ribosomal subunit. Forms a cluster with proteins L3 and L24e, part of which may contact the 16S rRNA in 2 intersubunit bridges.</text>
</comment>
<comment type="similarity">
    <text evidence="1">Belongs to the universal ribosomal protein uL14 family.</text>
</comment>
<proteinExistence type="inferred from homology"/>
<reference key="1">
    <citation type="journal article" date="2001" name="DNA Res.">
        <title>Complete genome sequence of an aerobic thermoacidophilic Crenarchaeon, Sulfolobus tokodaii strain7.</title>
        <authorList>
            <person name="Kawarabayasi Y."/>
            <person name="Hino Y."/>
            <person name="Horikawa H."/>
            <person name="Jin-no K."/>
            <person name="Takahashi M."/>
            <person name="Sekine M."/>
            <person name="Baba S."/>
            <person name="Ankai A."/>
            <person name="Kosugi H."/>
            <person name="Hosoyama A."/>
            <person name="Fukui S."/>
            <person name="Nagai Y."/>
            <person name="Nishijima K."/>
            <person name="Otsuka R."/>
            <person name="Nakazawa H."/>
            <person name="Takamiya M."/>
            <person name="Kato Y."/>
            <person name="Yoshizawa T."/>
            <person name="Tanaka T."/>
            <person name="Kudoh Y."/>
            <person name="Yamazaki J."/>
            <person name="Kushida N."/>
            <person name="Oguchi A."/>
            <person name="Aoki K."/>
            <person name="Masuda S."/>
            <person name="Yanagii M."/>
            <person name="Nishimura M."/>
            <person name="Yamagishi A."/>
            <person name="Oshima T."/>
            <person name="Kikuchi H."/>
        </authorList>
    </citation>
    <scope>NUCLEOTIDE SEQUENCE [LARGE SCALE GENOMIC DNA]</scope>
    <source>
        <strain>DSM 16993 / JCM 10545 / NBRC 100140 / 7</strain>
    </source>
</reference>
<protein>
    <recommendedName>
        <fullName evidence="1">Large ribosomal subunit protein uL14</fullName>
    </recommendedName>
    <alternativeName>
        <fullName evidence="2">50S ribosomal protein L14</fullName>
    </alternativeName>
</protein>
<keyword id="KW-1185">Reference proteome</keyword>
<keyword id="KW-0687">Ribonucleoprotein</keyword>
<keyword id="KW-0689">Ribosomal protein</keyword>
<keyword id="KW-0694">RNA-binding</keyword>
<keyword id="KW-0699">rRNA-binding</keyword>